<gene>
    <name type="primary">Rnf44</name>
    <name type="synonym">Kiaa1100</name>
</gene>
<comment type="alternative products">
    <event type="alternative splicing"/>
    <isoform>
        <id>Q3UHJ8-1</id>
        <name>1</name>
        <sequence type="displayed"/>
    </isoform>
    <isoform>
        <id>Q3UHJ8-2</id>
        <name>2</name>
        <sequence type="described" ref="VSP_022550 VSP_022551"/>
    </isoform>
    <isoform>
        <id>Q3UHJ8-3</id>
        <name>3</name>
        <sequence type="described" ref="VSP_022550"/>
    </isoform>
</comment>
<comment type="sequence caution" evidence="5">
    <conflict type="erroneous initiation">
        <sequence resource="EMBL-CDS" id="AAH17630"/>
    </conflict>
</comment>
<comment type="sequence caution" evidence="5">
    <conflict type="erroneous initiation">
        <sequence resource="EMBL-CDS" id="AAH35548"/>
    </conflict>
</comment>
<comment type="sequence caution" evidence="5">
    <conflict type="frameshift">
        <sequence resource="EMBL-CDS" id="BAC98100"/>
    </conflict>
</comment>
<feature type="chain" id="PRO_0000273414" description="RING finger protein 44">
    <location>
        <begin position="1"/>
        <end position="407"/>
    </location>
</feature>
<feature type="zinc finger region" description="RING-type; atypical" evidence="1">
    <location>
        <begin position="355"/>
        <end position="396"/>
    </location>
</feature>
<feature type="region of interest" description="Disordered" evidence="2">
    <location>
        <begin position="26"/>
        <end position="58"/>
    </location>
</feature>
<feature type="splice variant" id="VSP_022550" description="In isoform 2 and isoform 3." evidence="3 4">
    <location>
        <begin position="1"/>
        <end position="56"/>
    </location>
</feature>
<feature type="splice variant" id="VSP_022551" description="In isoform 2." evidence="3 4">
    <location>
        <position position="131"/>
    </location>
</feature>
<dbReference type="EMBL" id="AK129290">
    <property type="protein sequence ID" value="BAC98100.1"/>
    <property type="status" value="ALT_FRAME"/>
    <property type="molecule type" value="mRNA"/>
</dbReference>
<dbReference type="EMBL" id="AK147349">
    <property type="protein sequence ID" value="BAE27859.1"/>
    <property type="molecule type" value="mRNA"/>
</dbReference>
<dbReference type="EMBL" id="AK160090">
    <property type="protein sequence ID" value="BAE35621.1"/>
    <property type="molecule type" value="mRNA"/>
</dbReference>
<dbReference type="EMBL" id="AK160115">
    <property type="protein sequence ID" value="BAE35639.1"/>
    <property type="molecule type" value="mRNA"/>
</dbReference>
<dbReference type="EMBL" id="AK171943">
    <property type="protein sequence ID" value="BAE42740.1"/>
    <property type="molecule type" value="mRNA"/>
</dbReference>
<dbReference type="EMBL" id="BC017630">
    <property type="protein sequence ID" value="AAH17630.1"/>
    <property type="status" value="ALT_INIT"/>
    <property type="molecule type" value="mRNA"/>
</dbReference>
<dbReference type="EMBL" id="BC035548">
    <property type="protein sequence ID" value="AAH35548.1"/>
    <property type="status" value="ALT_INIT"/>
    <property type="molecule type" value="mRNA"/>
</dbReference>
<dbReference type="CCDS" id="CCDS49266.1">
    <molecule id="Q3UHJ8-2"/>
</dbReference>
<dbReference type="CCDS" id="CCDS49267.1">
    <molecule id="Q3UHJ8-3"/>
</dbReference>
<dbReference type="RefSeq" id="NP_001139497.1">
    <property type="nucleotide sequence ID" value="NM_001146025.1"/>
</dbReference>
<dbReference type="RefSeq" id="NP_001139498.1">
    <molecule id="Q3UHJ8-1"/>
    <property type="nucleotide sequence ID" value="NM_001146026.1"/>
</dbReference>
<dbReference type="RefSeq" id="NP_001139499.1">
    <molecule id="Q3UHJ8-3"/>
    <property type="nucleotide sequence ID" value="NM_001146027.1"/>
</dbReference>
<dbReference type="RefSeq" id="NP_598825.2">
    <molecule id="Q3UHJ8-2"/>
    <property type="nucleotide sequence ID" value="NM_134064.2"/>
</dbReference>
<dbReference type="RefSeq" id="XP_011242751.1">
    <molecule id="Q3UHJ8-3"/>
    <property type="nucleotide sequence ID" value="XM_011244449.2"/>
</dbReference>
<dbReference type="RefSeq" id="XP_011242752.1">
    <molecule id="Q3UHJ8-3"/>
    <property type="nucleotide sequence ID" value="XM_011244450.1"/>
</dbReference>
<dbReference type="RefSeq" id="XP_011242753.1">
    <molecule id="Q3UHJ8-2"/>
    <property type="nucleotide sequence ID" value="XM_011244451.1"/>
</dbReference>
<dbReference type="RefSeq" id="XP_017170825.1">
    <molecule id="Q3UHJ8-3"/>
    <property type="nucleotide sequence ID" value="XM_017315336.1"/>
</dbReference>
<dbReference type="RefSeq" id="XP_030102949.1">
    <molecule id="Q3UHJ8-3"/>
    <property type="nucleotide sequence ID" value="XM_030247089.1"/>
</dbReference>
<dbReference type="RefSeq" id="XP_030102950.1">
    <molecule id="Q3UHJ8-3"/>
    <property type="nucleotide sequence ID" value="XM_030247090.1"/>
</dbReference>
<dbReference type="RefSeq" id="XP_030102951.1">
    <molecule id="Q3UHJ8-3"/>
    <property type="nucleotide sequence ID" value="XM_030247091.1"/>
</dbReference>
<dbReference type="RefSeq" id="XP_030102952.1">
    <molecule id="Q3UHJ8-3"/>
    <property type="nucleotide sequence ID" value="XM_030247092.1"/>
</dbReference>
<dbReference type="RefSeq" id="XP_030102953.1">
    <molecule id="Q3UHJ8-3"/>
    <property type="nucleotide sequence ID" value="XM_030247093.1"/>
</dbReference>
<dbReference type="RefSeq" id="XP_030102955.1">
    <molecule id="Q3UHJ8-2"/>
    <property type="nucleotide sequence ID" value="XM_030247095.2"/>
</dbReference>
<dbReference type="RefSeq" id="XP_030102956.1">
    <molecule id="Q3UHJ8-2"/>
    <property type="nucleotide sequence ID" value="XM_030247096.2"/>
</dbReference>
<dbReference type="RefSeq" id="XP_030102957.1">
    <molecule id="Q3UHJ8-2"/>
    <property type="nucleotide sequence ID" value="XM_030247097.2"/>
</dbReference>
<dbReference type="RefSeq" id="XP_030102958.1">
    <molecule id="Q3UHJ8-2"/>
    <property type="nucleotide sequence ID" value="XM_030247098.1"/>
</dbReference>
<dbReference type="RefSeq" id="XP_030102959.1">
    <molecule id="Q3UHJ8-2"/>
    <property type="nucleotide sequence ID" value="XM_030247099.1"/>
</dbReference>
<dbReference type="RefSeq" id="XP_030102960.1">
    <molecule id="Q3UHJ8-2"/>
    <property type="nucleotide sequence ID" value="XM_030247100.1"/>
</dbReference>
<dbReference type="RefSeq" id="XP_036013702.1">
    <molecule id="Q3UHJ8-3"/>
    <property type="nucleotide sequence ID" value="XM_036157809.1"/>
</dbReference>
<dbReference type="SMR" id="Q3UHJ8"/>
<dbReference type="FunCoup" id="Q3UHJ8">
    <property type="interactions" value="1351"/>
</dbReference>
<dbReference type="STRING" id="10090.ENSMUSP00000118474"/>
<dbReference type="GlyGen" id="Q3UHJ8">
    <property type="glycosylation" value="1 site"/>
</dbReference>
<dbReference type="iPTMnet" id="Q3UHJ8"/>
<dbReference type="PhosphoSitePlus" id="Q3UHJ8"/>
<dbReference type="PaxDb" id="10090-ENSMUSP00000118474"/>
<dbReference type="DNASU" id="105239"/>
<dbReference type="Ensembl" id="ENSMUST00000037422.16">
    <molecule id="Q3UHJ8-2"/>
    <property type="protein sequence ID" value="ENSMUSP00000043974.10"/>
    <property type="gene ID" value="ENSMUSG00000034928.17"/>
</dbReference>
<dbReference type="Ensembl" id="ENSMUST00000128257.8">
    <molecule id="Q3UHJ8-2"/>
    <property type="protein sequence ID" value="ENSMUSP00000116850.2"/>
    <property type="gene ID" value="ENSMUSG00000034928.17"/>
</dbReference>
<dbReference type="Ensembl" id="ENSMUST00000134862.8">
    <molecule id="Q3UHJ8-3"/>
    <property type="protein sequence ID" value="ENSMUSP00000114259.2"/>
    <property type="gene ID" value="ENSMUSG00000034928.17"/>
</dbReference>
<dbReference type="Ensembl" id="ENSMUST00000150806.8">
    <molecule id="Q3UHJ8-3"/>
    <property type="protein sequence ID" value="ENSMUSP00000123198.2"/>
    <property type="gene ID" value="ENSMUSG00000034928.17"/>
</dbReference>
<dbReference type="Ensembl" id="ENSMUST00000177950.8">
    <molecule id="Q3UHJ8-2"/>
    <property type="protein sequence ID" value="ENSMUSP00000136732.2"/>
    <property type="gene ID" value="ENSMUSG00000034928.17"/>
</dbReference>
<dbReference type="GeneID" id="105239"/>
<dbReference type="KEGG" id="mmu:105239"/>
<dbReference type="UCSC" id="uc007qot.2">
    <molecule id="Q3UHJ8-2"/>
    <property type="organism name" value="mouse"/>
</dbReference>
<dbReference type="UCSC" id="uc007qou.2">
    <molecule id="Q3UHJ8-1"/>
    <property type="organism name" value="mouse"/>
</dbReference>
<dbReference type="AGR" id="MGI:2145310"/>
<dbReference type="CTD" id="22838"/>
<dbReference type="MGI" id="MGI:2145310">
    <property type="gene designation" value="Rnf44"/>
</dbReference>
<dbReference type="VEuPathDB" id="HostDB:ENSMUSG00000034928"/>
<dbReference type="eggNOG" id="KOG0800">
    <property type="taxonomic scope" value="Eukaryota"/>
</dbReference>
<dbReference type="GeneTree" id="ENSGT00940000158553"/>
<dbReference type="HOGENOM" id="CLU_024578_0_0_1"/>
<dbReference type="InParanoid" id="Q3UHJ8"/>
<dbReference type="OrthoDB" id="8062037at2759"/>
<dbReference type="PhylomeDB" id="Q3UHJ8"/>
<dbReference type="BioGRID-ORCS" id="105239">
    <property type="hits" value="2 hits in 77 CRISPR screens"/>
</dbReference>
<dbReference type="ChiTaRS" id="Rnf44">
    <property type="organism name" value="mouse"/>
</dbReference>
<dbReference type="PRO" id="PR:Q3UHJ8"/>
<dbReference type="Proteomes" id="UP000000589">
    <property type="component" value="Chromosome 13"/>
</dbReference>
<dbReference type="RNAct" id="Q3UHJ8">
    <property type="molecule type" value="protein"/>
</dbReference>
<dbReference type="Bgee" id="ENSMUSG00000034928">
    <property type="expression patterns" value="Expressed in undifferentiated genital tubercle and 259 other cell types or tissues"/>
</dbReference>
<dbReference type="ExpressionAtlas" id="Q3UHJ8">
    <property type="expression patterns" value="baseline and differential"/>
</dbReference>
<dbReference type="GO" id="GO:0008270">
    <property type="term" value="F:zinc ion binding"/>
    <property type="evidence" value="ECO:0007669"/>
    <property type="project" value="UniProtKB-KW"/>
</dbReference>
<dbReference type="CDD" id="cd16680">
    <property type="entry name" value="RING-H2_RNF44"/>
    <property type="match status" value="1"/>
</dbReference>
<dbReference type="FunFam" id="3.30.40.10:FF:000024">
    <property type="entry name" value="RING finger protein 44 isoform X1"/>
    <property type="match status" value="1"/>
</dbReference>
<dbReference type="Gene3D" id="3.30.40.10">
    <property type="entry name" value="Zinc/RING finger domain, C3HC4 (zinc finger)"/>
    <property type="match status" value="1"/>
</dbReference>
<dbReference type="InterPro" id="IPR001841">
    <property type="entry name" value="Znf_RING"/>
</dbReference>
<dbReference type="InterPro" id="IPR013083">
    <property type="entry name" value="Znf_RING/FYVE/PHD"/>
</dbReference>
<dbReference type="PANTHER" id="PTHR46171">
    <property type="entry name" value="GH10160P"/>
    <property type="match status" value="1"/>
</dbReference>
<dbReference type="PANTHER" id="PTHR46171:SF2">
    <property type="entry name" value="RING FINGER PROTEIN 44"/>
    <property type="match status" value="1"/>
</dbReference>
<dbReference type="Pfam" id="PF13639">
    <property type="entry name" value="zf-RING_2"/>
    <property type="match status" value="1"/>
</dbReference>
<dbReference type="SMART" id="SM00184">
    <property type="entry name" value="RING"/>
    <property type="match status" value="1"/>
</dbReference>
<dbReference type="SUPFAM" id="SSF57850">
    <property type="entry name" value="RING/U-box"/>
    <property type="match status" value="1"/>
</dbReference>
<dbReference type="PROSITE" id="PS50089">
    <property type="entry name" value="ZF_RING_2"/>
    <property type="match status" value="1"/>
</dbReference>
<accession>Q3UHJ8</accession>
<accession>Q3TAC8</accession>
<accession>Q3TVH9</accession>
<accession>Q6ZPX8</accession>
<accession>Q8VD22</accession>
<proteinExistence type="evidence at transcript level"/>
<reference key="1">
    <citation type="journal article" date="2003" name="DNA Res.">
        <title>Prediction of the coding sequences of mouse homologues of KIAA gene: III. The complete nucleotide sequences of 500 mouse KIAA-homologous cDNAs identified by screening of terminal sequences of cDNA clones randomly sampled from size-fractionated libraries.</title>
        <authorList>
            <person name="Okazaki N."/>
            <person name="Kikuno R."/>
            <person name="Ohara R."/>
            <person name="Inamoto S."/>
            <person name="Koseki H."/>
            <person name="Hiraoka S."/>
            <person name="Saga Y."/>
            <person name="Nagase T."/>
            <person name="Ohara O."/>
            <person name="Koga H."/>
        </authorList>
    </citation>
    <scope>NUCLEOTIDE SEQUENCE [LARGE SCALE MRNA] (ISOFORM 1)</scope>
    <source>
        <tissue>Brain</tissue>
    </source>
</reference>
<reference key="2">
    <citation type="journal article" date="2005" name="Science">
        <title>The transcriptional landscape of the mammalian genome.</title>
        <authorList>
            <person name="Carninci P."/>
            <person name="Kasukawa T."/>
            <person name="Katayama S."/>
            <person name="Gough J."/>
            <person name="Frith M.C."/>
            <person name="Maeda N."/>
            <person name="Oyama R."/>
            <person name="Ravasi T."/>
            <person name="Lenhard B."/>
            <person name="Wells C."/>
            <person name="Kodzius R."/>
            <person name="Shimokawa K."/>
            <person name="Bajic V.B."/>
            <person name="Brenner S.E."/>
            <person name="Batalov S."/>
            <person name="Forrest A.R."/>
            <person name="Zavolan M."/>
            <person name="Davis M.J."/>
            <person name="Wilming L.G."/>
            <person name="Aidinis V."/>
            <person name="Allen J.E."/>
            <person name="Ambesi-Impiombato A."/>
            <person name="Apweiler R."/>
            <person name="Aturaliya R.N."/>
            <person name="Bailey T.L."/>
            <person name="Bansal M."/>
            <person name="Baxter L."/>
            <person name="Beisel K.W."/>
            <person name="Bersano T."/>
            <person name="Bono H."/>
            <person name="Chalk A.M."/>
            <person name="Chiu K.P."/>
            <person name="Choudhary V."/>
            <person name="Christoffels A."/>
            <person name="Clutterbuck D.R."/>
            <person name="Crowe M.L."/>
            <person name="Dalla E."/>
            <person name="Dalrymple B.P."/>
            <person name="de Bono B."/>
            <person name="Della Gatta G."/>
            <person name="di Bernardo D."/>
            <person name="Down T."/>
            <person name="Engstrom P."/>
            <person name="Fagiolini M."/>
            <person name="Faulkner G."/>
            <person name="Fletcher C.F."/>
            <person name="Fukushima T."/>
            <person name="Furuno M."/>
            <person name="Futaki S."/>
            <person name="Gariboldi M."/>
            <person name="Georgii-Hemming P."/>
            <person name="Gingeras T.R."/>
            <person name="Gojobori T."/>
            <person name="Green R.E."/>
            <person name="Gustincich S."/>
            <person name="Harbers M."/>
            <person name="Hayashi Y."/>
            <person name="Hensch T.K."/>
            <person name="Hirokawa N."/>
            <person name="Hill D."/>
            <person name="Huminiecki L."/>
            <person name="Iacono M."/>
            <person name="Ikeo K."/>
            <person name="Iwama A."/>
            <person name="Ishikawa T."/>
            <person name="Jakt M."/>
            <person name="Kanapin A."/>
            <person name="Katoh M."/>
            <person name="Kawasawa Y."/>
            <person name="Kelso J."/>
            <person name="Kitamura H."/>
            <person name="Kitano H."/>
            <person name="Kollias G."/>
            <person name="Krishnan S.P."/>
            <person name="Kruger A."/>
            <person name="Kummerfeld S.K."/>
            <person name="Kurochkin I.V."/>
            <person name="Lareau L.F."/>
            <person name="Lazarevic D."/>
            <person name="Lipovich L."/>
            <person name="Liu J."/>
            <person name="Liuni S."/>
            <person name="McWilliam S."/>
            <person name="Madan Babu M."/>
            <person name="Madera M."/>
            <person name="Marchionni L."/>
            <person name="Matsuda H."/>
            <person name="Matsuzawa S."/>
            <person name="Miki H."/>
            <person name="Mignone F."/>
            <person name="Miyake S."/>
            <person name="Morris K."/>
            <person name="Mottagui-Tabar S."/>
            <person name="Mulder N."/>
            <person name="Nakano N."/>
            <person name="Nakauchi H."/>
            <person name="Ng P."/>
            <person name="Nilsson R."/>
            <person name="Nishiguchi S."/>
            <person name="Nishikawa S."/>
            <person name="Nori F."/>
            <person name="Ohara O."/>
            <person name="Okazaki Y."/>
            <person name="Orlando V."/>
            <person name="Pang K.C."/>
            <person name="Pavan W.J."/>
            <person name="Pavesi G."/>
            <person name="Pesole G."/>
            <person name="Petrovsky N."/>
            <person name="Piazza S."/>
            <person name="Reed J."/>
            <person name="Reid J.F."/>
            <person name="Ring B.Z."/>
            <person name="Ringwald M."/>
            <person name="Rost B."/>
            <person name="Ruan Y."/>
            <person name="Salzberg S.L."/>
            <person name="Sandelin A."/>
            <person name="Schneider C."/>
            <person name="Schoenbach C."/>
            <person name="Sekiguchi K."/>
            <person name="Semple C.A."/>
            <person name="Seno S."/>
            <person name="Sessa L."/>
            <person name="Sheng Y."/>
            <person name="Shibata Y."/>
            <person name="Shimada H."/>
            <person name="Shimada K."/>
            <person name="Silva D."/>
            <person name="Sinclair B."/>
            <person name="Sperling S."/>
            <person name="Stupka E."/>
            <person name="Sugiura K."/>
            <person name="Sultana R."/>
            <person name="Takenaka Y."/>
            <person name="Taki K."/>
            <person name="Tammoja K."/>
            <person name="Tan S.L."/>
            <person name="Tang S."/>
            <person name="Taylor M.S."/>
            <person name="Tegner J."/>
            <person name="Teichmann S.A."/>
            <person name="Ueda H.R."/>
            <person name="van Nimwegen E."/>
            <person name="Verardo R."/>
            <person name="Wei C.L."/>
            <person name="Yagi K."/>
            <person name="Yamanishi H."/>
            <person name="Zabarovsky E."/>
            <person name="Zhu S."/>
            <person name="Zimmer A."/>
            <person name="Hide W."/>
            <person name="Bult C."/>
            <person name="Grimmond S.M."/>
            <person name="Teasdale R.D."/>
            <person name="Liu E.T."/>
            <person name="Brusic V."/>
            <person name="Quackenbush J."/>
            <person name="Wahlestedt C."/>
            <person name="Mattick J.S."/>
            <person name="Hume D.A."/>
            <person name="Kai C."/>
            <person name="Sasaki D."/>
            <person name="Tomaru Y."/>
            <person name="Fukuda S."/>
            <person name="Kanamori-Katayama M."/>
            <person name="Suzuki M."/>
            <person name="Aoki J."/>
            <person name="Arakawa T."/>
            <person name="Iida J."/>
            <person name="Imamura K."/>
            <person name="Itoh M."/>
            <person name="Kato T."/>
            <person name="Kawaji H."/>
            <person name="Kawagashira N."/>
            <person name="Kawashima T."/>
            <person name="Kojima M."/>
            <person name="Kondo S."/>
            <person name="Konno H."/>
            <person name="Nakano K."/>
            <person name="Ninomiya N."/>
            <person name="Nishio T."/>
            <person name="Okada M."/>
            <person name="Plessy C."/>
            <person name="Shibata K."/>
            <person name="Shiraki T."/>
            <person name="Suzuki S."/>
            <person name="Tagami M."/>
            <person name="Waki K."/>
            <person name="Watahiki A."/>
            <person name="Okamura-Oho Y."/>
            <person name="Suzuki H."/>
            <person name="Kawai J."/>
            <person name="Hayashizaki Y."/>
        </authorList>
    </citation>
    <scope>NUCLEOTIDE SEQUENCE [LARGE SCALE MRNA] (ISOFORMS 1; 2 AND 3)</scope>
    <source>
        <strain>C57BL/6J</strain>
        <strain>NOD</strain>
        <tissue>Osteoclast</tissue>
        <tissue>Spleen</tissue>
    </source>
</reference>
<reference key="3">
    <citation type="journal article" date="2004" name="Genome Res.">
        <title>The status, quality, and expansion of the NIH full-length cDNA project: the Mammalian Gene Collection (MGC).</title>
        <authorList>
            <consortium name="The MGC Project Team"/>
        </authorList>
    </citation>
    <scope>NUCLEOTIDE SEQUENCE [LARGE SCALE MRNA] (ISOFORM 2)</scope>
    <source>
        <strain>FVB/N</strain>
        <tissue>Eye</tissue>
        <tissue>Kidney</tissue>
    </source>
</reference>
<evidence type="ECO:0000255" key="1">
    <source>
        <dbReference type="PROSITE-ProRule" id="PRU00175"/>
    </source>
</evidence>
<evidence type="ECO:0000256" key="2">
    <source>
        <dbReference type="SAM" id="MobiDB-lite"/>
    </source>
</evidence>
<evidence type="ECO:0000303" key="3">
    <source>
    </source>
</evidence>
<evidence type="ECO:0000303" key="4">
    <source>
    </source>
</evidence>
<evidence type="ECO:0000305" key="5"/>
<keyword id="KW-0025">Alternative splicing</keyword>
<keyword id="KW-0479">Metal-binding</keyword>
<keyword id="KW-1185">Reference proteome</keyword>
<keyword id="KW-0862">Zinc</keyword>
<keyword id="KW-0863">Zinc-finger</keyword>
<sequence length="407" mass="45497">MRPWTLAVTKWPPSAPVGHWRVSTRLSSSPGQLWGRPSNLSVEEHRASAPAGRSPRMLHPATQQSPFMVDLHEQVHQGPVPLSYTVTTVTTQGFPLPTSQHIPGCSAQQLPACSVMFSGQHYPLCCLPPPQLIQACTMQQLPGPYHTYPHLISSDHYILHPPPPAPPPQPTHMAPLGQFVSLQTQHPRMPLQRLDNEMDLRGDQHPLGSFTYSTSATGPALSPSVPLHYLPHDPLHQELSFGVPYSHMMPRRLSTQRYRLQQPLPPPPPPPPPSYYPSFLPYFLSMLPMSPTTVGPTISLDLDVDDVEMENYEALLNLAERLGDAKPRGLTKADIEQLPSYRFNPDSHQSEQTLCVVCFSDFEVRQLLRVLPCNHEFHAKCVDKWLKANRTCPICRADASEVPREAE</sequence>
<name>RNF44_MOUSE</name>
<protein>
    <recommendedName>
        <fullName>RING finger protein 44</fullName>
    </recommendedName>
</protein>
<organism>
    <name type="scientific">Mus musculus</name>
    <name type="common">Mouse</name>
    <dbReference type="NCBI Taxonomy" id="10090"/>
    <lineage>
        <taxon>Eukaryota</taxon>
        <taxon>Metazoa</taxon>
        <taxon>Chordata</taxon>
        <taxon>Craniata</taxon>
        <taxon>Vertebrata</taxon>
        <taxon>Euteleostomi</taxon>
        <taxon>Mammalia</taxon>
        <taxon>Eutheria</taxon>
        <taxon>Euarchontoglires</taxon>
        <taxon>Glires</taxon>
        <taxon>Rodentia</taxon>
        <taxon>Myomorpha</taxon>
        <taxon>Muroidea</taxon>
        <taxon>Muridae</taxon>
        <taxon>Murinae</taxon>
        <taxon>Mus</taxon>
        <taxon>Mus</taxon>
    </lineage>
</organism>